<reference key="1">
    <citation type="journal article" date="1998" name="Mol. Cell. Biol.">
        <title>BAZF, a novel Bcl6 homolog, functions as a transcriptional repressor.</title>
        <authorList>
            <person name="Okabe S."/>
            <person name="Fukuda T."/>
            <person name="Ishibashi K."/>
            <person name="Kojima S."/>
            <person name="Okada S."/>
            <person name="Hatano M."/>
            <person name="Ebara M."/>
            <person name="Saisho H."/>
            <person name="Tokuhisa T."/>
        </authorList>
    </citation>
    <scope>NUCLEOTIDE SEQUENCE [MRNA]</scope>
    <scope>FUNCTION</scope>
    <scope>TISSUE SPECIFICITY</scope>
    <scope>INDUCTION</scope>
    <scope>INTERACTION WITH BCL6</scope>
</reference>
<reference key="2">
    <citation type="journal article" date="2005" name="Science">
        <title>The transcriptional landscape of the mammalian genome.</title>
        <authorList>
            <person name="Carninci P."/>
            <person name="Kasukawa T."/>
            <person name="Katayama S."/>
            <person name="Gough J."/>
            <person name="Frith M.C."/>
            <person name="Maeda N."/>
            <person name="Oyama R."/>
            <person name="Ravasi T."/>
            <person name="Lenhard B."/>
            <person name="Wells C."/>
            <person name="Kodzius R."/>
            <person name="Shimokawa K."/>
            <person name="Bajic V.B."/>
            <person name="Brenner S.E."/>
            <person name="Batalov S."/>
            <person name="Forrest A.R."/>
            <person name="Zavolan M."/>
            <person name="Davis M.J."/>
            <person name="Wilming L.G."/>
            <person name="Aidinis V."/>
            <person name="Allen J.E."/>
            <person name="Ambesi-Impiombato A."/>
            <person name="Apweiler R."/>
            <person name="Aturaliya R.N."/>
            <person name="Bailey T.L."/>
            <person name="Bansal M."/>
            <person name="Baxter L."/>
            <person name="Beisel K.W."/>
            <person name="Bersano T."/>
            <person name="Bono H."/>
            <person name="Chalk A.M."/>
            <person name="Chiu K.P."/>
            <person name="Choudhary V."/>
            <person name="Christoffels A."/>
            <person name="Clutterbuck D.R."/>
            <person name="Crowe M.L."/>
            <person name="Dalla E."/>
            <person name="Dalrymple B.P."/>
            <person name="de Bono B."/>
            <person name="Della Gatta G."/>
            <person name="di Bernardo D."/>
            <person name="Down T."/>
            <person name="Engstrom P."/>
            <person name="Fagiolini M."/>
            <person name="Faulkner G."/>
            <person name="Fletcher C.F."/>
            <person name="Fukushima T."/>
            <person name="Furuno M."/>
            <person name="Futaki S."/>
            <person name="Gariboldi M."/>
            <person name="Georgii-Hemming P."/>
            <person name="Gingeras T.R."/>
            <person name="Gojobori T."/>
            <person name="Green R.E."/>
            <person name="Gustincich S."/>
            <person name="Harbers M."/>
            <person name="Hayashi Y."/>
            <person name="Hensch T.K."/>
            <person name="Hirokawa N."/>
            <person name="Hill D."/>
            <person name="Huminiecki L."/>
            <person name="Iacono M."/>
            <person name="Ikeo K."/>
            <person name="Iwama A."/>
            <person name="Ishikawa T."/>
            <person name="Jakt M."/>
            <person name="Kanapin A."/>
            <person name="Katoh M."/>
            <person name="Kawasawa Y."/>
            <person name="Kelso J."/>
            <person name="Kitamura H."/>
            <person name="Kitano H."/>
            <person name="Kollias G."/>
            <person name="Krishnan S.P."/>
            <person name="Kruger A."/>
            <person name="Kummerfeld S.K."/>
            <person name="Kurochkin I.V."/>
            <person name="Lareau L.F."/>
            <person name="Lazarevic D."/>
            <person name="Lipovich L."/>
            <person name="Liu J."/>
            <person name="Liuni S."/>
            <person name="McWilliam S."/>
            <person name="Madan Babu M."/>
            <person name="Madera M."/>
            <person name="Marchionni L."/>
            <person name="Matsuda H."/>
            <person name="Matsuzawa S."/>
            <person name="Miki H."/>
            <person name="Mignone F."/>
            <person name="Miyake S."/>
            <person name="Morris K."/>
            <person name="Mottagui-Tabar S."/>
            <person name="Mulder N."/>
            <person name="Nakano N."/>
            <person name="Nakauchi H."/>
            <person name="Ng P."/>
            <person name="Nilsson R."/>
            <person name="Nishiguchi S."/>
            <person name="Nishikawa S."/>
            <person name="Nori F."/>
            <person name="Ohara O."/>
            <person name="Okazaki Y."/>
            <person name="Orlando V."/>
            <person name="Pang K.C."/>
            <person name="Pavan W.J."/>
            <person name="Pavesi G."/>
            <person name="Pesole G."/>
            <person name="Petrovsky N."/>
            <person name="Piazza S."/>
            <person name="Reed J."/>
            <person name="Reid J.F."/>
            <person name="Ring B.Z."/>
            <person name="Ringwald M."/>
            <person name="Rost B."/>
            <person name="Ruan Y."/>
            <person name="Salzberg S.L."/>
            <person name="Sandelin A."/>
            <person name="Schneider C."/>
            <person name="Schoenbach C."/>
            <person name="Sekiguchi K."/>
            <person name="Semple C.A."/>
            <person name="Seno S."/>
            <person name="Sessa L."/>
            <person name="Sheng Y."/>
            <person name="Shibata Y."/>
            <person name="Shimada H."/>
            <person name="Shimada K."/>
            <person name="Silva D."/>
            <person name="Sinclair B."/>
            <person name="Sperling S."/>
            <person name="Stupka E."/>
            <person name="Sugiura K."/>
            <person name="Sultana R."/>
            <person name="Takenaka Y."/>
            <person name="Taki K."/>
            <person name="Tammoja K."/>
            <person name="Tan S.L."/>
            <person name="Tang S."/>
            <person name="Taylor M.S."/>
            <person name="Tegner J."/>
            <person name="Teichmann S.A."/>
            <person name="Ueda H.R."/>
            <person name="van Nimwegen E."/>
            <person name="Verardo R."/>
            <person name="Wei C.L."/>
            <person name="Yagi K."/>
            <person name="Yamanishi H."/>
            <person name="Zabarovsky E."/>
            <person name="Zhu S."/>
            <person name="Zimmer A."/>
            <person name="Hide W."/>
            <person name="Bult C."/>
            <person name="Grimmond S.M."/>
            <person name="Teasdale R.D."/>
            <person name="Liu E.T."/>
            <person name="Brusic V."/>
            <person name="Quackenbush J."/>
            <person name="Wahlestedt C."/>
            <person name="Mattick J.S."/>
            <person name="Hume D.A."/>
            <person name="Kai C."/>
            <person name="Sasaki D."/>
            <person name="Tomaru Y."/>
            <person name="Fukuda S."/>
            <person name="Kanamori-Katayama M."/>
            <person name="Suzuki M."/>
            <person name="Aoki J."/>
            <person name="Arakawa T."/>
            <person name="Iida J."/>
            <person name="Imamura K."/>
            <person name="Itoh M."/>
            <person name="Kato T."/>
            <person name="Kawaji H."/>
            <person name="Kawagashira N."/>
            <person name="Kawashima T."/>
            <person name="Kojima M."/>
            <person name="Kondo S."/>
            <person name="Konno H."/>
            <person name="Nakano K."/>
            <person name="Ninomiya N."/>
            <person name="Nishio T."/>
            <person name="Okada M."/>
            <person name="Plessy C."/>
            <person name="Shibata K."/>
            <person name="Shiraki T."/>
            <person name="Suzuki S."/>
            <person name="Tagami M."/>
            <person name="Waki K."/>
            <person name="Watahiki A."/>
            <person name="Okamura-Oho Y."/>
            <person name="Suzuki H."/>
            <person name="Kawai J."/>
            <person name="Hayashizaki Y."/>
        </authorList>
    </citation>
    <scope>NUCLEOTIDE SEQUENCE [LARGE SCALE MRNA] OF 304-474</scope>
    <source>
        <strain>C57BL/6J</strain>
        <tissue>Cerebellum</tissue>
    </source>
</reference>
<reference key="3">
    <citation type="journal article" date="2004" name="Int. Immunol.">
        <title>BAZF is required for activation of naive CD4 T cells by TCR triggering.</title>
        <authorList>
            <person name="Takamori M."/>
            <person name="Hatano M."/>
            <person name="Arima M."/>
            <person name="Sakamoto A."/>
            <person name="Fujimura L."/>
            <person name="Hartatik T."/>
            <person name="Kuriyama T."/>
            <person name="Tokuhisa T."/>
        </authorList>
    </citation>
    <scope>FUNCTION</scope>
</reference>
<feature type="chain" id="PRO_0000047101" description="B-cell CLL/lymphoma 6 member B protein">
    <location>
        <begin position="1"/>
        <end position="474"/>
    </location>
</feature>
<feature type="domain" description="BTB" evidence="1">
    <location>
        <begin position="38"/>
        <end position="105"/>
    </location>
</feature>
<feature type="zinc finger region" description="C2H2-type 1" evidence="2">
    <location>
        <begin position="323"/>
        <end position="345"/>
    </location>
</feature>
<feature type="zinc finger region" description="C2H2-type 2" evidence="2">
    <location>
        <begin position="351"/>
        <end position="373"/>
    </location>
</feature>
<feature type="zinc finger region" description="C2H2-type 3" evidence="2">
    <location>
        <begin position="379"/>
        <end position="401"/>
    </location>
</feature>
<feature type="zinc finger region" description="C2H2-type 4" evidence="2">
    <location>
        <begin position="407"/>
        <end position="429"/>
    </location>
</feature>
<feature type="zinc finger region" description="C2H2-type 5" evidence="2">
    <location>
        <begin position="435"/>
        <end position="458"/>
    </location>
</feature>
<feature type="region of interest" description="Disordered" evidence="3">
    <location>
        <begin position="144"/>
        <end position="190"/>
    </location>
</feature>
<feature type="region of interest" description="Disordered" evidence="3">
    <location>
        <begin position="210"/>
        <end position="249"/>
    </location>
</feature>
<feature type="compositionally biased region" description="Pro residues" evidence="3">
    <location>
        <begin position="150"/>
        <end position="160"/>
    </location>
</feature>
<feature type="compositionally biased region" description="Basic and acidic residues" evidence="3">
    <location>
        <begin position="162"/>
        <end position="172"/>
    </location>
</feature>
<feature type="compositionally biased region" description="Polar residues" evidence="3">
    <location>
        <begin position="173"/>
        <end position="183"/>
    </location>
</feature>
<feature type="compositionally biased region" description="Polar residues" evidence="3">
    <location>
        <begin position="210"/>
        <end position="220"/>
    </location>
</feature>
<feature type="compositionally biased region" description="Polar residues" evidence="3">
    <location>
        <begin position="240"/>
        <end position="249"/>
    </location>
</feature>
<sequence>MGSTAAPEGALGYVREFTRHSSDVLSNLNELRLRGILTDVTLLVGGQPLRAHKAVLIACSGFFYSIFRGRAGLGVDVLSLPGGPEARGFAPLLDFMYTSRLRLSPATAPAVLAAATYLQMEHVVQACHRFIQASYEPLGISLRPVEVEPPRPPTVAPPGSPRRSEGHPDPPTESRSCSQGSPSPASPDPKACNWKKYKFIVLNSQTSQAGSLVGESSGQPCPQARLPSGDEACSSSSSSEEGTTPGLQSRLSLATTTARFKCGALANNSYLFTPRAQETSLPASKQANPPPGSEFFSCQNCEAVAGCSSGLELLAPGDEDKPYKCQLCRSAFRYKGNLASHRTVHTGEKPYRCSICGARFNRPANLKTHSRIHSGEKPYKCETCGSRFVQVAHLRAHVLIHTGEKPYPCPTCGTRFRHLQTLKSHVRIHTGEKPYHCDPCGLHFRHKSQLRLHLRQKHGAATNTKVRYHILGGP</sequence>
<name>BCL6B_MOUSE</name>
<keyword id="KW-0479">Metal-binding</keyword>
<keyword id="KW-0539">Nucleus</keyword>
<keyword id="KW-1185">Reference proteome</keyword>
<keyword id="KW-0677">Repeat</keyword>
<keyword id="KW-0862">Zinc</keyword>
<keyword id="KW-0863">Zinc-finger</keyword>
<organism>
    <name type="scientific">Mus musculus</name>
    <name type="common">Mouse</name>
    <dbReference type="NCBI Taxonomy" id="10090"/>
    <lineage>
        <taxon>Eukaryota</taxon>
        <taxon>Metazoa</taxon>
        <taxon>Chordata</taxon>
        <taxon>Craniata</taxon>
        <taxon>Vertebrata</taxon>
        <taxon>Euteleostomi</taxon>
        <taxon>Mammalia</taxon>
        <taxon>Eutheria</taxon>
        <taxon>Euarchontoglires</taxon>
        <taxon>Glires</taxon>
        <taxon>Rodentia</taxon>
        <taxon>Myomorpha</taxon>
        <taxon>Muroidea</taxon>
        <taxon>Muridae</taxon>
        <taxon>Murinae</taxon>
        <taxon>Mus</taxon>
        <taxon>Mus</taxon>
    </lineage>
</organism>
<accession>O88282</accession>
<accession>Q8CCJ6</accession>
<dbReference type="EMBL" id="AB011665">
    <property type="protein sequence ID" value="BAA31223.1"/>
    <property type="molecule type" value="mRNA"/>
</dbReference>
<dbReference type="EMBL" id="AK032647">
    <property type="protein sequence ID" value="BAC27970.1"/>
    <property type="molecule type" value="mRNA"/>
</dbReference>
<dbReference type="CCDS" id="CCDS24939.1"/>
<dbReference type="RefSeq" id="NP_031554.1">
    <property type="nucleotide sequence ID" value="NM_007528.3"/>
</dbReference>
<dbReference type="SMR" id="O88282"/>
<dbReference type="BioGRID" id="198305">
    <property type="interactions" value="2"/>
</dbReference>
<dbReference type="FunCoup" id="O88282">
    <property type="interactions" value="1057"/>
</dbReference>
<dbReference type="STRING" id="10090.ENSMUSP00000000326"/>
<dbReference type="GlyGen" id="O88282">
    <property type="glycosylation" value="2 sites"/>
</dbReference>
<dbReference type="iPTMnet" id="O88282"/>
<dbReference type="PhosphoSitePlus" id="O88282"/>
<dbReference type="PaxDb" id="10090-ENSMUSP00000000326"/>
<dbReference type="Antibodypedia" id="23875">
    <property type="antibodies" value="72 antibodies from 22 providers"/>
</dbReference>
<dbReference type="DNASU" id="12029"/>
<dbReference type="Ensembl" id="ENSMUST00000000326.12">
    <property type="protein sequence ID" value="ENSMUSP00000000326.6"/>
    <property type="gene ID" value="ENSMUSG00000000317.12"/>
</dbReference>
<dbReference type="GeneID" id="12029"/>
<dbReference type="KEGG" id="mmu:12029"/>
<dbReference type="UCSC" id="uc007juc.2">
    <property type="organism name" value="mouse"/>
</dbReference>
<dbReference type="AGR" id="MGI:1278332"/>
<dbReference type="CTD" id="255877"/>
<dbReference type="MGI" id="MGI:1278332">
    <property type="gene designation" value="Bcl6b"/>
</dbReference>
<dbReference type="VEuPathDB" id="HostDB:ENSMUSG00000000317"/>
<dbReference type="eggNOG" id="KOG1721">
    <property type="taxonomic scope" value="Eukaryota"/>
</dbReference>
<dbReference type="GeneTree" id="ENSGT00940000159844"/>
<dbReference type="HOGENOM" id="CLU_024196_2_0_1"/>
<dbReference type="InParanoid" id="O88282"/>
<dbReference type="OMA" id="VCGARFN"/>
<dbReference type="OrthoDB" id="5560627at2759"/>
<dbReference type="PhylomeDB" id="O88282"/>
<dbReference type="TreeFam" id="TF330912"/>
<dbReference type="BioGRID-ORCS" id="12029">
    <property type="hits" value="0 hits in 77 CRISPR screens"/>
</dbReference>
<dbReference type="PRO" id="PR:O88282"/>
<dbReference type="Proteomes" id="UP000000589">
    <property type="component" value="Chromosome 11"/>
</dbReference>
<dbReference type="RNAct" id="O88282">
    <property type="molecule type" value="protein"/>
</dbReference>
<dbReference type="Bgee" id="ENSMUSG00000000317">
    <property type="expression patterns" value="Expressed in kidney vasculature and 188 other cell types or tissues"/>
</dbReference>
<dbReference type="ExpressionAtlas" id="O88282">
    <property type="expression patterns" value="baseline and differential"/>
</dbReference>
<dbReference type="GO" id="GO:0005634">
    <property type="term" value="C:nucleus"/>
    <property type="evidence" value="ECO:0000314"/>
    <property type="project" value="MGI"/>
</dbReference>
<dbReference type="GO" id="GO:0003677">
    <property type="term" value="F:DNA binding"/>
    <property type="evidence" value="ECO:0000314"/>
    <property type="project" value="MGI"/>
</dbReference>
<dbReference type="GO" id="GO:0001227">
    <property type="term" value="F:DNA-binding transcription repressor activity, RNA polymerase II-specific"/>
    <property type="evidence" value="ECO:0000314"/>
    <property type="project" value="NTNU_SB"/>
</dbReference>
<dbReference type="GO" id="GO:0000977">
    <property type="term" value="F:RNA polymerase II transcription regulatory region sequence-specific DNA binding"/>
    <property type="evidence" value="ECO:0000314"/>
    <property type="project" value="NTNU_SB"/>
</dbReference>
<dbReference type="GO" id="GO:0008270">
    <property type="term" value="F:zinc ion binding"/>
    <property type="evidence" value="ECO:0007669"/>
    <property type="project" value="UniProtKB-KW"/>
</dbReference>
<dbReference type="GO" id="GO:0000122">
    <property type="term" value="P:negative regulation of transcription by RNA polymerase II"/>
    <property type="evidence" value="ECO:0000314"/>
    <property type="project" value="MGI"/>
</dbReference>
<dbReference type="FunFam" id="3.30.710.10:FF:000097">
    <property type="entry name" value="B-cell CLL/lymphoma 6 member B protein"/>
    <property type="match status" value="1"/>
</dbReference>
<dbReference type="FunFam" id="3.30.160.60:FF:000065">
    <property type="entry name" value="B-cell CLL/lymphoma 6, member B"/>
    <property type="match status" value="1"/>
</dbReference>
<dbReference type="FunFam" id="3.30.160.60:FF:000105">
    <property type="entry name" value="B-cell CLL/lymphoma 6, member B"/>
    <property type="match status" value="2"/>
</dbReference>
<dbReference type="FunFam" id="3.30.160.60:FF:000289">
    <property type="entry name" value="B-cell CLL/lymphoma 6, member B"/>
    <property type="match status" value="1"/>
</dbReference>
<dbReference type="FunFam" id="3.30.160.60:FF:001344">
    <property type="entry name" value="Zinc finger protein 16 like"/>
    <property type="match status" value="1"/>
</dbReference>
<dbReference type="Gene3D" id="3.30.160.60">
    <property type="entry name" value="Classic Zinc Finger"/>
    <property type="match status" value="5"/>
</dbReference>
<dbReference type="Gene3D" id="3.30.710.10">
    <property type="entry name" value="Potassium Channel Kv1.1, Chain A"/>
    <property type="match status" value="1"/>
</dbReference>
<dbReference type="InterPro" id="IPR000210">
    <property type="entry name" value="BTB/POZ_dom"/>
</dbReference>
<dbReference type="InterPro" id="IPR011333">
    <property type="entry name" value="SKP1/BTB/POZ_sf"/>
</dbReference>
<dbReference type="InterPro" id="IPR036236">
    <property type="entry name" value="Znf_C2H2_sf"/>
</dbReference>
<dbReference type="InterPro" id="IPR013087">
    <property type="entry name" value="Znf_C2H2_type"/>
</dbReference>
<dbReference type="InterPro" id="IPR050457">
    <property type="entry name" value="ZnFinger_BTB_dom_contain"/>
</dbReference>
<dbReference type="PANTHER" id="PTHR46105">
    <property type="entry name" value="AGAP004733-PA"/>
    <property type="match status" value="1"/>
</dbReference>
<dbReference type="PANTHER" id="PTHR46105:SF28">
    <property type="entry name" value="ZINC FINGER PROTEIN 37-LIKE"/>
    <property type="match status" value="1"/>
</dbReference>
<dbReference type="Pfam" id="PF00651">
    <property type="entry name" value="BTB"/>
    <property type="match status" value="1"/>
</dbReference>
<dbReference type="Pfam" id="PF00096">
    <property type="entry name" value="zf-C2H2"/>
    <property type="match status" value="3"/>
</dbReference>
<dbReference type="SMART" id="SM00225">
    <property type="entry name" value="BTB"/>
    <property type="match status" value="1"/>
</dbReference>
<dbReference type="SMART" id="SM00355">
    <property type="entry name" value="ZnF_C2H2"/>
    <property type="match status" value="5"/>
</dbReference>
<dbReference type="SUPFAM" id="SSF57667">
    <property type="entry name" value="beta-beta-alpha zinc fingers"/>
    <property type="match status" value="3"/>
</dbReference>
<dbReference type="SUPFAM" id="SSF54695">
    <property type="entry name" value="POZ domain"/>
    <property type="match status" value="1"/>
</dbReference>
<dbReference type="PROSITE" id="PS50097">
    <property type="entry name" value="BTB"/>
    <property type="match status" value="1"/>
</dbReference>
<dbReference type="PROSITE" id="PS00028">
    <property type="entry name" value="ZINC_FINGER_C2H2_1"/>
    <property type="match status" value="5"/>
</dbReference>
<dbReference type="PROSITE" id="PS50157">
    <property type="entry name" value="ZINC_FINGER_C2H2_2"/>
    <property type="match status" value="5"/>
</dbReference>
<protein>
    <recommendedName>
        <fullName>B-cell CLL/lymphoma 6 member B protein</fullName>
    </recommendedName>
    <alternativeName>
        <fullName>Bcl6-associated zinc finger protein</fullName>
    </alternativeName>
</protein>
<comment type="function">
    <text evidence="4 5">Acts as a sequence-specific transcriptional repressor in association with BCL6. Necessary for activation of naive T-cells to antigenic stimulation. May attenuate the regulatory effect of BCL6 on antigenic activation of naive CD4 T-cells by forming a heterodimer with BCL6.</text>
</comment>
<comment type="subunit">
    <text>Associates with BCL6 through the BTB domain.</text>
</comment>
<comment type="subcellular location">
    <subcellularLocation>
        <location>Nucleus</location>
    </subcellularLocation>
</comment>
<comment type="tissue specificity">
    <text evidence="5">Ubiquitously expressed with higher expression found in heart and lung.</text>
</comment>
<comment type="induction">
    <text evidence="5">Induced in activated lymphocytes.</text>
</comment>
<comment type="domain">
    <text>Amino acids 178-210 are essential for repression activity.</text>
</comment>
<gene>
    <name type="primary">Bcl6b</name>
    <name type="synonym">Bazf</name>
</gene>
<proteinExistence type="evidence at protein level"/>
<evidence type="ECO:0000255" key="1">
    <source>
        <dbReference type="PROSITE-ProRule" id="PRU00037"/>
    </source>
</evidence>
<evidence type="ECO:0000255" key="2">
    <source>
        <dbReference type="PROSITE-ProRule" id="PRU00042"/>
    </source>
</evidence>
<evidence type="ECO:0000256" key="3">
    <source>
        <dbReference type="SAM" id="MobiDB-lite"/>
    </source>
</evidence>
<evidence type="ECO:0000269" key="4">
    <source>
    </source>
</evidence>
<evidence type="ECO:0000269" key="5">
    <source>
    </source>
</evidence>